<name>TAL_MYCUA</name>
<comment type="function">
    <text evidence="1">Transaldolase is important for the balance of metabolites in the pentose-phosphate pathway.</text>
</comment>
<comment type="catalytic activity">
    <reaction evidence="1">
        <text>D-sedoheptulose 7-phosphate + D-glyceraldehyde 3-phosphate = D-erythrose 4-phosphate + beta-D-fructose 6-phosphate</text>
        <dbReference type="Rhea" id="RHEA:17053"/>
        <dbReference type="ChEBI" id="CHEBI:16897"/>
        <dbReference type="ChEBI" id="CHEBI:57483"/>
        <dbReference type="ChEBI" id="CHEBI:57634"/>
        <dbReference type="ChEBI" id="CHEBI:59776"/>
        <dbReference type="EC" id="2.2.1.2"/>
    </reaction>
</comment>
<comment type="pathway">
    <text evidence="1">Carbohydrate degradation; pentose phosphate pathway; D-glyceraldehyde 3-phosphate and beta-D-fructose 6-phosphate from D-ribose 5-phosphate and D-xylulose 5-phosphate (non-oxidative stage): step 2/3.</text>
</comment>
<comment type="subcellular location">
    <subcellularLocation>
        <location evidence="1">Cytoplasm</location>
    </subcellularLocation>
</comment>
<comment type="similarity">
    <text evidence="1">Belongs to the transaldolase family. Type 2 subfamily.</text>
</comment>
<keyword id="KW-0963">Cytoplasm</keyword>
<keyword id="KW-0570">Pentose shunt</keyword>
<keyword id="KW-0704">Schiff base</keyword>
<keyword id="KW-0808">Transferase</keyword>
<evidence type="ECO:0000255" key="1">
    <source>
        <dbReference type="HAMAP-Rule" id="MF_00493"/>
    </source>
</evidence>
<reference key="1">
    <citation type="journal article" date="2007" name="Genome Res.">
        <title>Reductive evolution and niche adaptation inferred from the genome of Mycobacterium ulcerans, the causative agent of Buruli ulcer.</title>
        <authorList>
            <person name="Stinear T.P."/>
            <person name="Seemann T."/>
            <person name="Pidot S."/>
            <person name="Frigui W."/>
            <person name="Reysset G."/>
            <person name="Garnier T."/>
            <person name="Meurice G."/>
            <person name="Simon D."/>
            <person name="Bouchier C."/>
            <person name="Ma L."/>
            <person name="Tichit M."/>
            <person name="Porter J.L."/>
            <person name="Ryan J."/>
            <person name="Johnson P.D.R."/>
            <person name="Davies J.K."/>
            <person name="Jenkin G.A."/>
            <person name="Small P.L.C."/>
            <person name="Jones L.M."/>
            <person name="Tekaia F."/>
            <person name="Laval F."/>
            <person name="Daffe M."/>
            <person name="Parkhill J."/>
            <person name="Cole S.T."/>
        </authorList>
    </citation>
    <scope>NUCLEOTIDE SEQUENCE [LARGE SCALE GENOMIC DNA]</scope>
    <source>
        <strain>Agy99</strain>
    </source>
</reference>
<sequence length="373" mass="40162">MASQKPNLAALSAAGVSVWLDDLSRDRLRSGNLQELIDTKSVVGVTTNPSIFQKALSEGHDYDAQVAELAERGADVDATIRTVTTDDVRNACDVLAPRWEASGGVDGRVSIEVDPRLAHETDKTIQQAVELWKIVDRPNLLIKIPATKAGLPAIAAVLAEGISVNVTLIFSVDRHRGVMDAYLTGMEKAAQAGHDLSKIHSVASFFVSRVDTEIDNRLEQIGSAEALALRGQAGVANARLAYAAYQEVFEGDARYQALKERGARVQRPLWASTGVKNPDYSDTLYVTELVAPHTVNTMPEKTLDAVADHGVVKGDSITGTSGDAQQVFDKLEAIGIDLSDVFDVLESEGVEKFEASWKELLDATQAQLDALAK</sequence>
<protein>
    <recommendedName>
        <fullName evidence="1">Transaldolase</fullName>
        <ecNumber evidence="1">2.2.1.2</ecNumber>
    </recommendedName>
</protein>
<proteinExistence type="inferred from homology"/>
<accession>A0PPP5</accession>
<organism>
    <name type="scientific">Mycobacterium ulcerans (strain Agy99)</name>
    <dbReference type="NCBI Taxonomy" id="362242"/>
    <lineage>
        <taxon>Bacteria</taxon>
        <taxon>Bacillati</taxon>
        <taxon>Actinomycetota</taxon>
        <taxon>Actinomycetes</taxon>
        <taxon>Mycobacteriales</taxon>
        <taxon>Mycobacteriaceae</taxon>
        <taxon>Mycobacterium</taxon>
        <taxon>Mycobacterium ulcerans group</taxon>
    </lineage>
</organism>
<dbReference type="EC" id="2.2.1.2" evidence="1"/>
<dbReference type="EMBL" id="CP000325">
    <property type="protein sequence ID" value="ABL04314.1"/>
    <property type="molecule type" value="Genomic_DNA"/>
</dbReference>
<dbReference type="RefSeq" id="WP_011739934.1">
    <property type="nucleotide sequence ID" value="NC_008611.1"/>
</dbReference>
<dbReference type="SMR" id="A0PPP5"/>
<dbReference type="KEGG" id="mul:MUL_1843"/>
<dbReference type="eggNOG" id="COG0176">
    <property type="taxonomic scope" value="Bacteria"/>
</dbReference>
<dbReference type="HOGENOM" id="CLU_050771_1_0_11"/>
<dbReference type="UniPathway" id="UPA00115">
    <property type="reaction ID" value="UER00414"/>
</dbReference>
<dbReference type="Proteomes" id="UP000000765">
    <property type="component" value="Chromosome"/>
</dbReference>
<dbReference type="GO" id="GO:0005737">
    <property type="term" value="C:cytoplasm"/>
    <property type="evidence" value="ECO:0007669"/>
    <property type="project" value="UniProtKB-SubCell"/>
</dbReference>
<dbReference type="GO" id="GO:0004801">
    <property type="term" value="F:transaldolase activity"/>
    <property type="evidence" value="ECO:0007669"/>
    <property type="project" value="UniProtKB-UniRule"/>
</dbReference>
<dbReference type="GO" id="GO:0005975">
    <property type="term" value="P:carbohydrate metabolic process"/>
    <property type="evidence" value="ECO:0007669"/>
    <property type="project" value="InterPro"/>
</dbReference>
<dbReference type="GO" id="GO:0006098">
    <property type="term" value="P:pentose-phosphate shunt"/>
    <property type="evidence" value="ECO:0007669"/>
    <property type="project" value="UniProtKB-UniRule"/>
</dbReference>
<dbReference type="CDD" id="cd00955">
    <property type="entry name" value="Transaldolase_like"/>
    <property type="match status" value="1"/>
</dbReference>
<dbReference type="Gene3D" id="3.20.20.70">
    <property type="entry name" value="Aldolase class I"/>
    <property type="match status" value="1"/>
</dbReference>
<dbReference type="HAMAP" id="MF_00493">
    <property type="entry name" value="Transaldolase_2"/>
    <property type="match status" value="1"/>
</dbReference>
<dbReference type="InterPro" id="IPR013785">
    <property type="entry name" value="Aldolase_TIM"/>
</dbReference>
<dbReference type="InterPro" id="IPR001585">
    <property type="entry name" value="TAL/FSA"/>
</dbReference>
<dbReference type="InterPro" id="IPR004732">
    <property type="entry name" value="Transaldolase_2"/>
</dbReference>
<dbReference type="InterPro" id="IPR018225">
    <property type="entry name" value="Transaldolase_AS"/>
</dbReference>
<dbReference type="NCBIfam" id="NF002881">
    <property type="entry name" value="PRK03343.1"/>
    <property type="match status" value="1"/>
</dbReference>
<dbReference type="NCBIfam" id="TIGR00876">
    <property type="entry name" value="tal_mycobact"/>
    <property type="match status" value="1"/>
</dbReference>
<dbReference type="PANTHER" id="PTHR10683">
    <property type="entry name" value="TRANSALDOLASE"/>
    <property type="match status" value="1"/>
</dbReference>
<dbReference type="PANTHER" id="PTHR10683:SF31">
    <property type="entry name" value="TRANSALDOLASE"/>
    <property type="match status" value="1"/>
</dbReference>
<dbReference type="Pfam" id="PF00923">
    <property type="entry name" value="TAL_FSA"/>
    <property type="match status" value="1"/>
</dbReference>
<dbReference type="PIRSF" id="PIRSF036915">
    <property type="entry name" value="Trnald_Bac_Plnt"/>
    <property type="match status" value="1"/>
</dbReference>
<dbReference type="SUPFAM" id="SSF51569">
    <property type="entry name" value="Aldolase"/>
    <property type="match status" value="1"/>
</dbReference>
<dbReference type="PROSITE" id="PS01054">
    <property type="entry name" value="TRANSALDOLASE_1"/>
    <property type="match status" value="1"/>
</dbReference>
<feature type="chain" id="PRO_1000026528" description="Transaldolase">
    <location>
        <begin position="1"/>
        <end position="373"/>
    </location>
</feature>
<feature type="active site" description="Schiff-base intermediate with substrate" evidence="1">
    <location>
        <position position="143"/>
    </location>
</feature>
<gene>
    <name evidence="1" type="primary">tal</name>
    <name type="ordered locus">MUL_1843</name>
</gene>